<gene>
    <name type="primary">Mbnl2</name>
    <name type="synonym">Kiaa4072</name>
</gene>
<accession>Q8C181</accession>
<accession>Q3TPH4</accession>
<accession>Q5DTQ0</accession>
<accession>Q8BUD8</accession>
<proteinExistence type="evidence at transcript level"/>
<sequence>MALNVAPVRDTKWLTLEVCRQYQRGTCSRSDEECKFAHPPKSCQVENGRVIACFDSLKGRCSRENCKYLHPPTHLKTQLEINGRNNLIQQKTAAAMLAQQMQFMFPGTPLHPVPTFPVGPTIGTNAAISFAPYLAPVTPGVGLVPTEVLPTTPVIVPGSPPVTVPGSTATQKLLRTDKLEVCREFQRGNCARGETDCRFAHPADSTMIDTNDNTVTVCMDYIKGRCMREKCKYFHPPAHLQAKIKAAQHQANQAAVAAQAAAAAATVMTQSTAKALKRPLEATVDLAFPPGALHPLPKRQALEKSNGASTVFNPSVLHYQQALTSAQLQQHTAFIPTVPMMHSATSATVSAATTPATSVPFAATATANQIILK</sequence>
<name>MBNL2_MOUSE</name>
<keyword id="KW-0025">Alternative splicing</keyword>
<keyword id="KW-0963">Cytoplasm</keyword>
<keyword id="KW-0479">Metal-binding</keyword>
<keyword id="KW-0507">mRNA processing</keyword>
<keyword id="KW-0508">mRNA splicing</keyword>
<keyword id="KW-0539">Nucleus</keyword>
<keyword id="KW-1185">Reference proteome</keyword>
<keyword id="KW-0677">Repeat</keyword>
<keyword id="KW-0694">RNA-binding</keyword>
<keyword id="KW-0862">Zinc</keyword>
<keyword id="KW-0863">Zinc-finger</keyword>
<comment type="function">
    <text evidence="1 2">Mediates pre-mRNA alternative splicing regulation. Acts either as activator or repressor of splicing on specific pre-mRNA targets. Inhibits cardiac troponin-T (TNNT2) pre-mRNA exon inclusion but induces insulin receptor (IR) pre-mRNA exon inclusion in muscle. Antagonizes the alternative splicing activity pattern of CELF proteins. RNA-binding protein that binds to 5'ACACCC-3' core sequence, termed zipcode, within the 3'UTR of ITGA3. Binds to CUG triplet repeat expansion in myotonic dystrophy muscle cells by sequestering the target RNAs. Together with RNA binding proteins RBPMS and RBFOX2, activates vascular smooth muscle cells alternative splicing events (By similarity). Regulates NCOR2 alternative splicing (By similarity). Seems to regulate expression and localization of ITGA3 by transporting it from the nucleus to cytoplasm at adhesion plaques. May play a role in myotonic dystrophy pathophysiology (DM) (By similarity).</text>
</comment>
<comment type="subunit">
    <text evidence="1">Interacts with ITGA3.</text>
</comment>
<comment type="subcellular location">
    <subcellularLocation>
        <location evidence="3">Nucleus</location>
    </subcellularLocation>
    <subcellularLocation>
        <location evidence="3">Cytoplasm</location>
    </subcellularLocation>
    <text evidence="3">Greater concentration in the nucleus. Expressed in or near large cytoplasmic adhesion plaques. Location in the cytoplasm is microtubule-dependent.</text>
</comment>
<comment type="alternative products">
    <event type="alternative splicing"/>
    <isoform>
        <id>Q8C181-1</id>
        <name>1</name>
        <sequence type="displayed"/>
    </isoform>
    <isoform>
        <id>Q8C181-2</id>
        <name>2</name>
        <sequence type="described" ref="VSP_022890"/>
    </isoform>
    <isoform>
        <id>Q8C181-3</id>
        <name>3</name>
        <sequence type="described" ref="VSP_022889"/>
    </isoform>
    <isoform>
        <id>Q8C181-4</id>
        <name>4</name>
        <sequence type="described" ref="VSP_022891"/>
    </isoform>
</comment>
<comment type="similarity">
    <text evidence="8">Belongs to the muscleblind family.</text>
</comment>
<comment type="sequence caution" evidence="8">
    <conflict type="erroneous initiation">
        <sequence resource="EMBL-CDS" id="BAD90497"/>
    </conflict>
</comment>
<organism>
    <name type="scientific">Mus musculus</name>
    <name type="common">Mouse</name>
    <dbReference type="NCBI Taxonomy" id="10090"/>
    <lineage>
        <taxon>Eukaryota</taxon>
        <taxon>Metazoa</taxon>
        <taxon>Chordata</taxon>
        <taxon>Craniata</taxon>
        <taxon>Vertebrata</taxon>
        <taxon>Euteleostomi</taxon>
        <taxon>Mammalia</taxon>
        <taxon>Eutheria</taxon>
        <taxon>Euarchontoglires</taxon>
        <taxon>Glires</taxon>
        <taxon>Rodentia</taxon>
        <taxon>Myomorpha</taxon>
        <taxon>Muroidea</taxon>
        <taxon>Muridae</taxon>
        <taxon>Murinae</taxon>
        <taxon>Mus</taxon>
        <taxon>Mus</taxon>
    </lineage>
</organism>
<dbReference type="EMBL" id="AK028797">
    <property type="protein sequence ID" value="BAC26125.1"/>
    <property type="molecule type" value="mRNA"/>
</dbReference>
<dbReference type="EMBL" id="AK085709">
    <property type="protein sequence ID" value="BAC39515.1"/>
    <property type="molecule type" value="mRNA"/>
</dbReference>
<dbReference type="EMBL" id="AK151913">
    <property type="protein sequence ID" value="BAE30793.1"/>
    <property type="molecule type" value="mRNA"/>
</dbReference>
<dbReference type="EMBL" id="AK151926">
    <property type="protein sequence ID" value="BAE30803.1"/>
    <property type="molecule type" value="mRNA"/>
</dbReference>
<dbReference type="EMBL" id="AK151957">
    <property type="protein sequence ID" value="BAE30829.1"/>
    <property type="molecule type" value="mRNA"/>
</dbReference>
<dbReference type="EMBL" id="AK159213">
    <property type="protein sequence ID" value="BAE34902.1"/>
    <property type="molecule type" value="mRNA"/>
</dbReference>
<dbReference type="EMBL" id="AK164372">
    <property type="protein sequence ID" value="BAE37762.1"/>
    <property type="molecule type" value="mRNA"/>
</dbReference>
<dbReference type="EMBL" id="AK167479">
    <property type="protein sequence ID" value="BAE39560.1"/>
    <property type="molecule type" value="mRNA"/>
</dbReference>
<dbReference type="EMBL" id="AK220470">
    <property type="protein sequence ID" value="BAD90497.1"/>
    <property type="status" value="ALT_INIT"/>
    <property type="molecule type" value="mRNA"/>
</dbReference>
<dbReference type="EMBL" id="BC075665">
    <property type="protein sequence ID" value="AAH75665.1"/>
    <property type="molecule type" value="mRNA"/>
</dbReference>
<dbReference type="CCDS" id="CCDS49567.1">
    <molecule id="Q8C181-1"/>
</dbReference>
<dbReference type="CCDS" id="CCDS49568.1">
    <molecule id="Q8C181-2"/>
</dbReference>
<dbReference type="RefSeq" id="NP_001347305.1">
    <molecule id="Q8C181-1"/>
    <property type="nucleotide sequence ID" value="NM_001360376.1"/>
</dbReference>
<dbReference type="RefSeq" id="NP_001347309.1">
    <molecule id="Q8C181-4"/>
    <property type="nucleotide sequence ID" value="NM_001360380.1"/>
</dbReference>
<dbReference type="RefSeq" id="NP_780550.1">
    <molecule id="Q8C181-1"/>
    <property type="nucleotide sequence ID" value="NM_175341.4"/>
</dbReference>
<dbReference type="RefSeq" id="NP_997398.1">
    <molecule id="Q8C181-2"/>
    <property type="nucleotide sequence ID" value="NM_207515.2"/>
</dbReference>
<dbReference type="RefSeq" id="XP_006518436.1">
    <property type="nucleotide sequence ID" value="XM_006518373.1"/>
</dbReference>
<dbReference type="RefSeq" id="XP_006518437.1">
    <property type="nucleotide sequence ID" value="XM_006518374.3"/>
</dbReference>
<dbReference type="RefSeq" id="XP_030103449.1">
    <molecule id="Q8C181-2"/>
    <property type="nucleotide sequence ID" value="XM_030247589.2"/>
</dbReference>
<dbReference type="SMR" id="Q8C181"/>
<dbReference type="BioGRID" id="222876">
    <property type="interactions" value="1"/>
</dbReference>
<dbReference type="FunCoup" id="Q8C181">
    <property type="interactions" value="2661"/>
</dbReference>
<dbReference type="STRING" id="10090.ENSMUSP00000085763"/>
<dbReference type="GlyGen" id="Q8C181">
    <property type="glycosylation" value="2 sites"/>
</dbReference>
<dbReference type="iPTMnet" id="Q8C181"/>
<dbReference type="PhosphoSitePlus" id="Q8C181"/>
<dbReference type="SwissPalm" id="Q8C181"/>
<dbReference type="jPOST" id="Q8C181"/>
<dbReference type="PaxDb" id="10090-ENSMUSP00000085763"/>
<dbReference type="PeptideAtlas" id="Q8C181"/>
<dbReference type="ProteomicsDB" id="295806">
    <molecule id="Q8C181-1"/>
</dbReference>
<dbReference type="ProteomicsDB" id="295807">
    <molecule id="Q8C181-2"/>
</dbReference>
<dbReference type="ProteomicsDB" id="295808">
    <molecule id="Q8C181-3"/>
</dbReference>
<dbReference type="ProteomicsDB" id="295809">
    <molecule id="Q8C181-4"/>
</dbReference>
<dbReference type="Pumba" id="Q8C181"/>
<dbReference type="Antibodypedia" id="24898">
    <property type="antibodies" value="122 antibodies from 20 providers"/>
</dbReference>
<dbReference type="DNASU" id="105559"/>
<dbReference type="Ensembl" id="ENSMUST00000088419.13">
    <molecule id="Q8C181-1"/>
    <property type="protein sequence ID" value="ENSMUSP00000085763.7"/>
    <property type="gene ID" value="ENSMUSG00000022139.18"/>
</dbReference>
<dbReference type="Ensembl" id="ENSMUST00000226800.2">
    <molecule id="Q8C181-2"/>
    <property type="protein sequence ID" value="ENSMUSP00000154734.2"/>
    <property type="gene ID" value="ENSMUSG00000022139.18"/>
</dbReference>
<dbReference type="Ensembl" id="ENSMUST00000227012.2">
    <molecule id="Q8C181-2"/>
    <property type="protein sequence ID" value="ENSMUSP00000153973.2"/>
    <property type="gene ID" value="ENSMUSG00000022139.18"/>
</dbReference>
<dbReference type="Ensembl" id="ENSMUST00000227594.2">
    <molecule id="Q8C181-1"/>
    <property type="protein sequence ID" value="ENSMUSP00000154559.2"/>
    <property type="gene ID" value="ENSMUSG00000022139.18"/>
</dbReference>
<dbReference type="GeneID" id="105559"/>
<dbReference type="KEGG" id="mmu:105559"/>
<dbReference type="UCSC" id="uc007uzq.1">
    <molecule id="Q8C181-3"/>
    <property type="organism name" value="mouse"/>
</dbReference>
<dbReference type="UCSC" id="uc007uzr.1">
    <molecule id="Q8C181-1"/>
    <property type="organism name" value="mouse"/>
</dbReference>
<dbReference type="UCSC" id="uc007uzs.1">
    <molecule id="Q8C181-2"/>
    <property type="organism name" value="mouse"/>
</dbReference>
<dbReference type="UCSC" id="uc007uzt.1">
    <molecule id="Q8C181-4"/>
    <property type="organism name" value="mouse"/>
</dbReference>
<dbReference type="AGR" id="MGI:2145597"/>
<dbReference type="CTD" id="10150"/>
<dbReference type="MGI" id="MGI:2145597">
    <property type="gene designation" value="Mbnl2"/>
</dbReference>
<dbReference type="VEuPathDB" id="HostDB:ENSMUSG00000022139"/>
<dbReference type="eggNOG" id="KOG2494">
    <property type="taxonomic scope" value="Eukaryota"/>
</dbReference>
<dbReference type="GeneTree" id="ENSGT00950000182897"/>
<dbReference type="HOGENOM" id="CLU_053536_0_0_1"/>
<dbReference type="InParanoid" id="Q8C181"/>
<dbReference type="OMA" id="PTXNSEI"/>
<dbReference type="PhylomeDB" id="Q8C181"/>
<dbReference type="TreeFam" id="TF321931"/>
<dbReference type="BioGRID-ORCS" id="105559">
    <property type="hits" value="2 hits in 79 CRISPR screens"/>
</dbReference>
<dbReference type="ChiTaRS" id="Mbnl2">
    <property type="organism name" value="mouse"/>
</dbReference>
<dbReference type="PRO" id="PR:Q8C181"/>
<dbReference type="Proteomes" id="UP000000589">
    <property type="component" value="Chromosome 14"/>
</dbReference>
<dbReference type="RNAct" id="Q8C181">
    <property type="molecule type" value="protein"/>
</dbReference>
<dbReference type="Bgee" id="ENSMUSG00000022139">
    <property type="expression patterns" value="Expressed in manus and 236 other cell types or tissues"/>
</dbReference>
<dbReference type="ExpressionAtlas" id="Q8C181">
    <property type="expression patterns" value="baseline and differential"/>
</dbReference>
<dbReference type="GO" id="GO:0005737">
    <property type="term" value="C:cytoplasm"/>
    <property type="evidence" value="ECO:0007669"/>
    <property type="project" value="UniProtKB-SubCell"/>
</dbReference>
<dbReference type="GO" id="GO:0005634">
    <property type="term" value="C:nucleus"/>
    <property type="evidence" value="ECO:0007669"/>
    <property type="project" value="UniProtKB-SubCell"/>
</dbReference>
<dbReference type="GO" id="GO:0003723">
    <property type="term" value="F:RNA binding"/>
    <property type="evidence" value="ECO:0007669"/>
    <property type="project" value="UniProtKB-KW"/>
</dbReference>
<dbReference type="GO" id="GO:0008270">
    <property type="term" value="F:zinc ion binding"/>
    <property type="evidence" value="ECO:0007669"/>
    <property type="project" value="UniProtKB-KW"/>
</dbReference>
<dbReference type="GO" id="GO:0006397">
    <property type="term" value="P:mRNA processing"/>
    <property type="evidence" value="ECO:0007669"/>
    <property type="project" value="UniProtKB-KW"/>
</dbReference>
<dbReference type="GO" id="GO:0000381">
    <property type="term" value="P:regulation of alternative mRNA splicing, via spliceosome"/>
    <property type="evidence" value="ECO:0000315"/>
    <property type="project" value="MGI"/>
</dbReference>
<dbReference type="GO" id="GO:0043484">
    <property type="term" value="P:regulation of RNA splicing"/>
    <property type="evidence" value="ECO:0000250"/>
    <property type="project" value="UniProtKB"/>
</dbReference>
<dbReference type="GO" id="GO:0008380">
    <property type="term" value="P:RNA splicing"/>
    <property type="evidence" value="ECO:0007669"/>
    <property type="project" value="UniProtKB-KW"/>
</dbReference>
<dbReference type="FunFam" id="3.30.1370.210:FF:000004">
    <property type="entry name" value="Muscleblind like splicing regulator 1"/>
    <property type="match status" value="1"/>
</dbReference>
<dbReference type="FunFam" id="3.30.1370.210:FF:000002">
    <property type="entry name" value="Muscleblind-like 1 isoform 2"/>
    <property type="match status" value="1"/>
</dbReference>
<dbReference type="Gene3D" id="3.30.1370.210">
    <property type="match status" value="2"/>
</dbReference>
<dbReference type="InterPro" id="IPR054429">
    <property type="entry name" value="Znf-CCCH_Muscleblind-like"/>
</dbReference>
<dbReference type="InterPro" id="IPR000571">
    <property type="entry name" value="Znf_CCCH"/>
</dbReference>
<dbReference type="PANTHER" id="PTHR12675">
    <property type="entry name" value="MUSCLEBLIND-LIKE PROTEIN"/>
    <property type="match status" value="1"/>
</dbReference>
<dbReference type="PANTHER" id="PTHR12675:SF4">
    <property type="entry name" value="MUSCLEBLIND-LIKE PROTEIN 2"/>
    <property type="match status" value="1"/>
</dbReference>
<dbReference type="Pfam" id="PF00642">
    <property type="entry name" value="zf-CCCH"/>
    <property type="match status" value="2"/>
</dbReference>
<dbReference type="Pfam" id="PF22628">
    <property type="entry name" value="zf-CCCH_10"/>
    <property type="match status" value="2"/>
</dbReference>
<dbReference type="SMART" id="SM00356">
    <property type="entry name" value="ZnF_C3H1"/>
    <property type="match status" value="4"/>
</dbReference>
<dbReference type="PROSITE" id="PS50103">
    <property type="entry name" value="ZF_C3H1"/>
    <property type="match status" value="4"/>
</dbReference>
<protein>
    <recommendedName>
        <fullName>Muscleblind-like protein 2</fullName>
    </recommendedName>
</protein>
<feature type="chain" id="PRO_0000274873" description="Muscleblind-like protein 2">
    <location>
        <begin position="1"/>
        <end position="373"/>
    </location>
</feature>
<feature type="zinc finger region" description="C3H1-type 1" evidence="4">
    <location>
        <begin position="13"/>
        <end position="41"/>
    </location>
</feature>
<feature type="zinc finger region" description="C3H1-type 2" evidence="4">
    <location>
        <begin position="47"/>
        <end position="73"/>
    </location>
</feature>
<feature type="zinc finger region" description="C3H1-type 3" evidence="4">
    <location>
        <begin position="176"/>
        <end position="204"/>
    </location>
</feature>
<feature type="zinc finger region" description="C3H1-type 4" evidence="4">
    <location>
        <begin position="212"/>
        <end position="238"/>
    </location>
</feature>
<feature type="splice variant" id="VSP_022889" description="In isoform 3." evidence="6">
    <original>TQSTAKALKRPLEATVDLAFPPGALHPLPKRQALEKSNGASTVFNPSVLHYQQALTSAQLQQHTAFIPTVPMMHSATSATVSAATTPATSVPFAATATANQIILK</original>
    <variation>VSAPAAPALLRLPGRGWCLRVGRSCASGQLGDKAAIPAAPLPKLCRHPPPLLVLFCFALPSLHNN</variation>
    <location>
        <begin position="269"/>
        <end position="373"/>
    </location>
</feature>
<feature type="splice variant" id="VSP_022890" description="In isoform 2." evidence="5 6">
    <location>
        <begin position="269"/>
        <end position="286"/>
    </location>
</feature>
<feature type="splice variant" id="VSP_022891" description="In isoform 4." evidence="7">
    <original>VPMMHSATSATVSAATTPATSVPFAATATANQIILK</original>
    <variation>DNSEIINRNGMECQESALRITKHCYCTYYPVSSSIELPQTAC</variation>
    <location>
        <begin position="338"/>
        <end position="373"/>
    </location>
</feature>
<feature type="sequence conflict" description="In Ref. 2; BAE37762." evidence="8" ref="2">
    <original>A</original>
    <variation>V</variation>
    <location>
        <position position="261"/>
    </location>
</feature>
<reference key="1">
    <citation type="journal article" date="2005" name="Science">
        <title>The transcriptional landscape of the mammalian genome.</title>
        <authorList>
            <person name="Carninci P."/>
            <person name="Kasukawa T."/>
            <person name="Katayama S."/>
            <person name="Gough J."/>
            <person name="Frith M.C."/>
            <person name="Maeda N."/>
            <person name="Oyama R."/>
            <person name="Ravasi T."/>
            <person name="Lenhard B."/>
            <person name="Wells C."/>
            <person name="Kodzius R."/>
            <person name="Shimokawa K."/>
            <person name="Bajic V.B."/>
            <person name="Brenner S.E."/>
            <person name="Batalov S."/>
            <person name="Forrest A.R."/>
            <person name="Zavolan M."/>
            <person name="Davis M.J."/>
            <person name="Wilming L.G."/>
            <person name="Aidinis V."/>
            <person name="Allen J.E."/>
            <person name="Ambesi-Impiombato A."/>
            <person name="Apweiler R."/>
            <person name="Aturaliya R.N."/>
            <person name="Bailey T.L."/>
            <person name="Bansal M."/>
            <person name="Baxter L."/>
            <person name="Beisel K.W."/>
            <person name="Bersano T."/>
            <person name="Bono H."/>
            <person name="Chalk A.M."/>
            <person name="Chiu K.P."/>
            <person name="Choudhary V."/>
            <person name="Christoffels A."/>
            <person name="Clutterbuck D.R."/>
            <person name="Crowe M.L."/>
            <person name="Dalla E."/>
            <person name="Dalrymple B.P."/>
            <person name="de Bono B."/>
            <person name="Della Gatta G."/>
            <person name="di Bernardo D."/>
            <person name="Down T."/>
            <person name="Engstrom P."/>
            <person name="Fagiolini M."/>
            <person name="Faulkner G."/>
            <person name="Fletcher C.F."/>
            <person name="Fukushima T."/>
            <person name="Furuno M."/>
            <person name="Futaki S."/>
            <person name="Gariboldi M."/>
            <person name="Georgii-Hemming P."/>
            <person name="Gingeras T.R."/>
            <person name="Gojobori T."/>
            <person name="Green R.E."/>
            <person name="Gustincich S."/>
            <person name="Harbers M."/>
            <person name="Hayashi Y."/>
            <person name="Hensch T.K."/>
            <person name="Hirokawa N."/>
            <person name="Hill D."/>
            <person name="Huminiecki L."/>
            <person name="Iacono M."/>
            <person name="Ikeo K."/>
            <person name="Iwama A."/>
            <person name="Ishikawa T."/>
            <person name="Jakt M."/>
            <person name="Kanapin A."/>
            <person name="Katoh M."/>
            <person name="Kawasawa Y."/>
            <person name="Kelso J."/>
            <person name="Kitamura H."/>
            <person name="Kitano H."/>
            <person name="Kollias G."/>
            <person name="Krishnan S.P."/>
            <person name="Kruger A."/>
            <person name="Kummerfeld S.K."/>
            <person name="Kurochkin I.V."/>
            <person name="Lareau L.F."/>
            <person name="Lazarevic D."/>
            <person name="Lipovich L."/>
            <person name="Liu J."/>
            <person name="Liuni S."/>
            <person name="McWilliam S."/>
            <person name="Madan Babu M."/>
            <person name="Madera M."/>
            <person name="Marchionni L."/>
            <person name="Matsuda H."/>
            <person name="Matsuzawa S."/>
            <person name="Miki H."/>
            <person name="Mignone F."/>
            <person name="Miyake S."/>
            <person name="Morris K."/>
            <person name="Mottagui-Tabar S."/>
            <person name="Mulder N."/>
            <person name="Nakano N."/>
            <person name="Nakauchi H."/>
            <person name="Ng P."/>
            <person name="Nilsson R."/>
            <person name="Nishiguchi S."/>
            <person name="Nishikawa S."/>
            <person name="Nori F."/>
            <person name="Ohara O."/>
            <person name="Okazaki Y."/>
            <person name="Orlando V."/>
            <person name="Pang K.C."/>
            <person name="Pavan W.J."/>
            <person name="Pavesi G."/>
            <person name="Pesole G."/>
            <person name="Petrovsky N."/>
            <person name="Piazza S."/>
            <person name="Reed J."/>
            <person name="Reid J.F."/>
            <person name="Ring B.Z."/>
            <person name="Ringwald M."/>
            <person name="Rost B."/>
            <person name="Ruan Y."/>
            <person name="Salzberg S.L."/>
            <person name="Sandelin A."/>
            <person name="Schneider C."/>
            <person name="Schoenbach C."/>
            <person name="Sekiguchi K."/>
            <person name="Semple C.A."/>
            <person name="Seno S."/>
            <person name="Sessa L."/>
            <person name="Sheng Y."/>
            <person name="Shibata Y."/>
            <person name="Shimada H."/>
            <person name="Shimada K."/>
            <person name="Silva D."/>
            <person name="Sinclair B."/>
            <person name="Sperling S."/>
            <person name="Stupka E."/>
            <person name="Sugiura K."/>
            <person name="Sultana R."/>
            <person name="Takenaka Y."/>
            <person name="Taki K."/>
            <person name="Tammoja K."/>
            <person name="Tan S.L."/>
            <person name="Tang S."/>
            <person name="Taylor M.S."/>
            <person name="Tegner J."/>
            <person name="Teichmann S.A."/>
            <person name="Ueda H.R."/>
            <person name="van Nimwegen E."/>
            <person name="Verardo R."/>
            <person name="Wei C.L."/>
            <person name="Yagi K."/>
            <person name="Yamanishi H."/>
            <person name="Zabarovsky E."/>
            <person name="Zhu S."/>
            <person name="Zimmer A."/>
            <person name="Hide W."/>
            <person name="Bult C."/>
            <person name="Grimmond S.M."/>
            <person name="Teasdale R.D."/>
            <person name="Liu E.T."/>
            <person name="Brusic V."/>
            <person name="Quackenbush J."/>
            <person name="Wahlestedt C."/>
            <person name="Mattick J.S."/>
            <person name="Hume D.A."/>
            <person name="Kai C."/>
            <person name="Sasaki D."/>
            <person name="Tomaru Y."/>
            <person name="Fukuda S."/>
            <person name="Kanamori-Katayama M."/>
            <person name="Suzuki M."/>
            <person name="Aoki J."/>
            <person name="Arakawa T."/>
            <person name="Iida J."/>
            <person name="Imamura K."/>
            <person name="Itoh M."/>
            <person name="Kato T."/>
            <person name="Kawaji H."/>
            <person name="Kawagashira N."/>
            <person name="Kawashima T."/>
            <person name="Kojima M."/>
            <person name="Kondo S."/>
            <person name="Konno H."/>
            <person name="Nakano K."/>
            <person name="Ninomiya N."/>
            <person name="Nishio T."/>
            <person name="Okada M."/>
            <person name="Plessy C."/>
            <person name="Shibata K."/>
            <person name="Shiraki T."/>
            <person name="Suzuki S."/>
            <person name="Tagami M."/>
            <person name="Waki K."/>
            <person name="Watahiki A."/>
            <person name="Okamura-Oho Y."/>
            <person name="Suzuki H."/>
            <person name="Kawai J."/>
            <person name="Hayashizaki Y."/>
        </authorList>
    </citation>
    <scope>NUCLEOTIDE SEQUENCE [LARGE SCALE MRNA] (ISOFORMS 1; 2 AND 3)</scope>
    <source>
        <strain>C57BL/6J</strain>
        <tissue>Bone marrow</tissue>
        <tissue>Mammary gland</tissue>
        <tissue>Osteoclast</tissue>
        <tissue>Placenta</tissue>
        <tissue>Skin</tissue>
        <tissue>Spinal ganglion</tissue>
    </source>
</reference>
<reference key="2">
    <citation type="submission" date="2005-02" db="EMBL/GenBank/DDBJ databases">
        <title>Prediction of the coding sequences of mouse homologues of KIAA gene. The complete nucleotide sequences of mouse KIAA-homologous cDNAs identified by screening of terminal sequences of cDNA clones randomly sampled from size-fractionated libraries.</title>
        <authorList>
            <person name="Okazaki N."/>
            <person name="Kikuno R.F."/>
            <person name="Ohara R."/>
            <person name="Inamoto S."/>
            <person name="Nagase T."/>
            <person name="Ohara O."/>
            <person name="Koga H."/>
        </authorList>
    </citation>
    <scope>NUCLEOTIDE SEQUENCE [LARGE SCALE MRNA] (ISOFORM 4)</scope>
    <source>
        <tissue>Fetal brain</tissue>
    </source>
</reference>
<reference key="3">
    <citation type="journal article" date="2004" name="Genome Res.">
        <title>The status, quality, and expansion of the NIH full-length cDNA project: the Mammalian Gene Collection (MGC).</title>
        <authorList>
            <consortium name="The MGC Project Team"/>
        </authorList>
    </citation>
    <scope>NUCLEOTIDE SEQUENCE [LARGE SCALE MRNA] (ISOFORM 2)</scope>
    <source>
        <strain>C57BL/6J</strain>
        <tissue>Eye</tissue>
    </source>
</reference>
<evidence type="ECO:0000250" key="1"/>
<evidence type="ECO:0000250" key="2">
    <source>
        <dbReference type="UniProtKB" id="F2Z3T4"/>
    </source>
</evidence>
<evidence type="ECO:0000250" key="3">
    <source>
        <dbReference type="UniProtKB" id="Q5VZF2"/>
    </source>
</evidence>
<evidence type="ECO:0000255" key="4">
    <source>
        <dbReference type="PROSITE-ProRule" id="PRU00723"/>
    </source>
</evidence>
<evidence type="ECO:0000303" key="5">
    <source>
    </source>
</evidence>
<evidence type="ECO:0000303" key="6">
    <source>
    </source>
</evidence>
<evidence type="ECO:0000303" key="7">
    <source ref="2"/>
</evidence>
<evidence type="ECO:0000305" key="8"/>